<name>CLPC_PYRYE</name>
<accession>Q1XDF4</accession>
<reference key="1">
    <citation type="submission" date="2003-11" db="EMBL/GenBank/DDBJ databases">
        <title>Whole genome sequence of Porphyra yezoensis chloroplast.</title>
        <authorList>
            <person name="Kunimoto M."/>
            <person name="Morishima K."/>
            <person name="Yoshikawa M."/>
            <person name="Fukuda S."/>
            <person name="Kobayashi T."/>
            <person name="Kobayashi M."/>
            <person name="Okazaki T."/>
            <person name="Ohara I."/>
            <person name="Nakayama I."/>
        </authorList>
    </citation>
    <scope>NUCLEOTIDE SEQUENCE [LARGE SCALE GENOMIC DNA]</scope>
    <source>
        <strain>U-51</strain>
    </source>
</reference>
<gene>
    <name type="primary">clpC</name>
</gene>
<keyword id="KW-0067">ATP-binding</keyword>
<keyword id="KW-0143">Chaperone</keyword>
<keyword id="KW-0150">Chloroplast</keyword>
<keyword id="KW-0547">Nucleotide-binding</keyword>
<keyword id="KW-0934">Plastid</keyword>
<keyword id="KW-0677">Repeat</keyword>
<proteinExistence type="inferred from homology"/>
<geneLocation type="chloroplast"/>
<feature type="chain" id="PRO_0000277286" description="ATP-dependent Clp protease ATP-binding subunit ClpA homolog">
    <location>
        <begin position="1"/>
        <end position="821"/>
    </location>
</feature>
<feature type="domain" description="Clp R" evidence="2">
    <location>
        <begin position="2"/>
        <end position="144"/>
    </location>
</feature>
<feature type="region of interest" description="Repeat 1" evidence="2">
    <location>
        <begin position="5"/>
        <end position="70"/>
    </location>
</feature>
<feature type="region of interest" description="Repeat 2" evidence="2">
    <location>
        <begin position="80"/>
        <end position="144"/>
    </location>
</feature>
<feature type="binding site" evidence="1">
    <location>
        <begin position="210"/>
        <end position="217"/>
    </location>
    <ligand>
        <name>ATP</name>
        <dbReference type="ChEBI" id="CHEBI:30616"/>
    </ligand>
</feature>
<feature type="binding site" evidence="1">
    <location>
        <begin position="549"/>
        <end position="556"/>
    </location>
    <ligand>
        <name>ATP</name>
        <dbReference type="ChEBI" id="CHEBI:30616"/>
    </ligand>
</feature>
<sequence length="821" mass="91041">MFERFTEKAIKVIMLAQEEARRLGHNFVGTEQILLGLVGEGTGIAAQVLKSMNVNLKDARVEVEKIIGRGSGFVAVEIPFTPRAKRVLELSLEEARQLGHNYIGTEHLLMGLVREGEGVAARVLENLAVDVSSIRAEVIQMLGENAEANVSGSNTTQARSKTPTLEEFGSNLTQMAMEGGLDPVVGRQKEIERVIQILGRRTKNNPVLIGEPGVGKTAIAEGLAQRIANRDVPSILEDKLVITLDVGLLVAGTKYRGEFEERLKRIMDEIKSADNVILVIDEVHTLIGAGAAEGAIDAANLLKPALARGELQCIGATTLEEYRKHIEKDPALERRFQPVVVGEPSVEETIEILFGLRDRYEKHHQLTMSDGALAAAAKYANQYISDRFLPDKAIDLIDEAGSRVRLLNSQLPPAARELDKELRAVLKTKDEAIRAQKYETAEQYRAREMEIKAQIAAIAQSKKNEPDLNLEDPVVTEDDIAEIVAAWTGIPVTKLTKSESEKLMHMEETLHGRIIGQDEAVVAVSRAIRRARVGLKNPNRPIASFIFSGPTGVGKTELTKALASYFFGSEASMIRLDMSEYMERHTVSKLIGSPPGYVGYSEGGYLTEAVRKKPYTVILFDEIEKAHPDIFNLLLQILEDGRLTDAKGRTIDFKNTLLIMTSNIGSKVIEKGGGSLGFELSEDQTESQYTRVRSLVNEELKQYFRPEFLNRLDEIIVFRQLTKDEVREIAELMLNEVFARIKQQDIQLNVTERFKQRLVEEGYNPSYGARPLRRAVMRLLEDSLAEEVLSGKIKAGDSAVVDVTNEGEVTVLLGEKLELLT</sequence>
<evidence type="ECO:0000255" key="1"/>
<evidence type="ECO:0000255" key="2">
    <source>
        <dbReference type="PROSITE-ProRule" id="PRU01251"/>
    </source>
</evidence>
<evidence type="ECO:0000305" key="3"/>
<protein>
    <recommendedName>
        <fullName>ATP-dependent Clp protease ATP-binding subunit ClpA homolog</fullName>
    </recommendedName>
</protein>
<comment type="function">
    <text>May interact with a ClpP-like protease involved in degradation of denatured proteins in the chloroplast.</text>
</comment>
<comment type="subcellular location">
    <subcellularLocation>
        <location>Plastid</location>
        <location>Chloroplast</location>
    </subcellularLocation>
</comment>
<comment type="similarity">
    <text evidence="3">Belongs to the ClpA/ClpB family.</text>
</comment>
<organism>
    <name type="scientific">Pyropia yezoensis</name>
    <name type="common">Susabi-nori</name>
    <name type="synonym">Porphyra yezoensis</name>
    <dbReference type="NCBI Taxonomy" id="2788"/>
    <lineage>
        <taxon>Eukaryota</taxon>
        <taxon>Rhodophyta</taxon>
        <taxon>Bangiophyceae</taxon>
        <taxon>Bangiales</taxon>
        <taxon>Bangiaceae</taxon>
        <taxon>Pyropia</taxon>
    </lineage>
</organism>
<dbReference type="EMBL" id="AP006715">
    <property type="protein sequence ID" value="BAE92457.1"/>
    <property type="molecule type" value="Genomic_DNA"/>
</dbReference>
<dbReference type="RefSeq" id="YP_537014.1">
    <property type="nucleotide sequence ID" value="NC_007932.1"/>
</dbReference>
<dbReference type="SMR" id="Q1XDF4"/>
<dbReference type="GeneID" id="3978846"/>
<dbReference type="GO" id="GO:0009507">
    <property type="term" value="C:chloroplast"/>
    <property type="evidence" value="ECO:0007669"/>
    <property type="project" value="UniProtKB-SubCell"/>
</dbReference>
<dbReference type="GO" id="GO:0005524">
    <property type="term" value="F:ATP binding"/>
    <property type="evidence" value="ECO:0007669"/>
    <property type="project" value="UniProtKB-KW"/>
</dbReference>
<dbReference type="GO" id="GO:0016887">
    <property type="term" value="F:ATP hydrolysis activity"/>
    <property type="evidence" value="ECO:0007669"/>
    <property type="project" value="InterPro"/>
</dbReference>
<dbReference type="GO" id="GO:0034605">
    <property type="term" value="P:cellular response to heat"/>
    <property type="evidence" value="ECO:0007669"/>
    <property type="project" value="TreeGrafter"/>
</dbReference>
<dbReference type="CDD" id="cd00009">
    <property type="entry name" value="AAA"/>
    <property type="match status" value="1"/>
</dbReference>
<dbReference type="CDD" id="cd19499">
    <property type="entry name" value="RecA-like_ClpB_Hsp104-like"/>
    <property type="match status" value="1"/>
</dbReference>
<dbReference type="FunFam" id="1.10.8.60:FF:000017">
    <property type="entry name" value="ATP-dependent chaperone ClpB"/>
    <property type="match status" value="1"/>
</dbReference>
<dbReference type="FunFam" id="1.10.1780.10:FF:000004">
    <property type="entry name" value="ATP-dependent Clp protease ATP-binding subunit ClpC"/>
    <property type="match status" value="1"/>
</dbReference>
<dbReference type="FunFam" id="3.40.50.300:FF:000025">
    <property type="entry name" value="ATP-dependent Clp protease subunit"/>
    <property type="match status" value="1"/>
</dbReference>
<dbReference type="FunFam" id="3.40.50.300:FF:000010">
    <property type="entry name" value="Chaperone clpB 1, putative"/>
    <property type="match status" value="1"/>
</dbReference>
<dbReference type="Gene3D" id="1.10.8.60">
    <property type="match status" value="2"/>
</dbReference>
<dbReference type="Gene3D" id="1.10.1780.10">
    <property type="entry name" value="Clp, N-terminal domain"/>
    <property type="match status" value="1"/>
</dbReference>
<dbReference type="Gene3D" id="3.40.50.300">
    <property type="entry name" value="P-loop containing nucleotide triphosphate hydrolases"/>
    <property type="match status" value="2"/>
</dbReference>
<dbReference type="Gene3D" id="4.10.860.10">
    <property type="entry name" value="UVR domain"/>
    <property type="match status" value="1"/>
</dbReference>
<dbReference type="InterPro" id="IPR003593">
    <property type="entry name" value="AAA+_ATPase"/>
</dbReference>
<dbReference type="InterPro" id="IPR003959">
    <property type="entry name" value="ATPase_AAA_core"/>
</dbReference>
<dbReference type="InterPro" id="IPR019489">
    <property type="entry name" value="Clp_ATPase_C"/>
</dbReference>
<dbReference type="InterPro" id="IPR036628">
    <property type="entry name" value="Clp_N_dom_sf"/>
</dbReference>
<dbReference type="InterPro" id="IPR004176">
    <property type="entry name" value="Clp_R_dom"/>
</dbReference>
<dbReference type="InterPro" id="IPR001270">
    <property type="entry name" value="ClpA/B"/>
</dbReference>
<dbReference type="InterPro" id="IPR018368">
    <property type="entry name" value="ClpA/B_CS1"/>
</dbReference>
<dbReference type="InterPro" id="IPR028299">
    <property type="entry name" value="ClpA/B_CS2"/>
</dbReference>
<dbReference type="InterPro" id="IPR041546">
    <property type="entry name" value="ClpA/ClpB_AAA_lid"/>
</dbReference>
<dbReference type="InterPro" id="IPR050130">
    <property type="entry name" value="ClpA_ClpB"/>
</dbReference>
<dbReference type="InterPro" id="IPR027417">
    <property type="entry name" value="P-loop_NTPase"/>
</dbReference>
<dbReference type="InterPro" id="IPR001943">
    <property type="entry name" value="UVR_dom"/>
</dbReference>
<dbReference type="PANTHER" id="PTHR11638">
    <property type="entry name" value="ATP-DEPENDENT CLP PROTEASE"/>
    <property type="match status" value="1"/>
</dbReference>
<dbReference type="PANTHER" id="PTHR11638:SF155">
    <property type="entry name" value="CHAPERONE PROTEIN CLPC1, CHLOROPLASTIC-LIKE"/>
    <property type="match status" value="1"/>
</dbReference>
<dbReference type="Pfam" id="PF00004">
    <property type="entry name" value="AAA"/>
    <property type="match status" value="1"/>
</dbReference>
<dbReference type="Pfam" id="PF07724">
    <property type="entry name" value="AAA_2"/>
    <property type="match status" value="1"/>
</dbReference>
<dbReference type="Pfam" id="PF17871">
    <property type="entry name" value="AAA_lid_9"/>
    <property type="match status" value="1"/>
</dbReference>
<dbReference type="Pfam" id="PF02861">
    <property type="entry name" value="Clp_N"/>
    <property type="match status" value="2"/>
</dbReference>
<dbReference type="Pfam" id="PF10431">
    <property type="entry name" value="ClpB_D2-small"/>
    <property type="match status" value="1"/>
</dbReference>
<dbReference type="PRINTS" id="PR00300">
    <property type="entry name" value="CLPPROTEASEA"/>
</dbReference>
<dbReference type="SMART" id="SM00382">
    <property type="entry name" value="AAA"/>
    <property type="match status" value="2"/>
</dbReference>
<dbReference type="SMART" id="SM01086">
    <property type="entry name" value="ClpB_D2-small"/>
    <property type="match status" value="1"/>
</dbReference>
<dbReference type="SUPFAM" id="SSF81923">
    <property type="entry name" value="Double Clp-N motif"/>
    <property type="match status" value="1"/>
</dbReference>
<dbReference type="SUPFAM" id="SSF52540">
    <property type="entry name" value="P-loop containing nucleoside triphosphate hydrolases"/>
    <property type="match status" value="2"/>
</dbReference>
<dbReference type="PROSITE" id="PS51903">
    <property type="entry name" value="CLP_R"/>
    <property type="match status" value="1"/>
</dbReference>
<dbReference type="PROSITE" id="PS00870">
    <property type="entry name" value="CLPAB_1"/>
    <property type="match status" value="1"/>
</dbReference>
<dbReference type="PROSITE" id="PS00871">
    <property type="entry name" value="CLPAB_2"/>
    <property type="match status" value="1"/>
</dbReference>
<dbReference type="PROSITE" id="PS50151">
    <property type="entry name" value="UVR"/>
    <property type="match status" value="1"/>
</dbReference>